<organism>
    <name type="scientific">Lactiplantibacillus plantarum (strain ATCC BAA-793 / NCIMB 8826 / WCFS1)</name>
    <name type="common">Lactobacillus plantarum</name>
    <dbReference type="NCBI Taxonomy" id="220668"/>
    <lineage>
        <taxon>Bacteria</taxon>
        <taxon>Bacillati</taxon>
        <taxon>Bacillota</taxon>
        <taxon>Bacilli</taxon>
        <taxon>Lactobacillales</taxon>
        <taxon>Lactobacillaceae</taxon>
        <taxon>Lactiplantibacillus</taxon>
    </lineage>
</organism>
<proteinExistence type="inferred from homology"/>
<dbReference type="EMBL" id="AL935263">
    <property type="protein sequence ID" value="CCC79462.1"/>
    <property type="molecule type" value="Genomic_DNA"/>
</dbReference>
<dbReference type="RefSeq" id="WP_003641545.1">
    <property type="nucleotide sequence ID" value="NC_004567.2"/>
</dbReference>
<dbReference type="RefSeq" id="YP_004889976.1">
    <property type="nucleotide sequence ID" value="NC_004567.2"/>
</dbReference>
<dbReference type="SMR" id="Q88V33"/>
<dbReference type="STRING" id="220668.lp_2253"/>
<dbReference type="EnsemblBacteria" id="CCC79462">
    <property type="protein sequence ID" value="CCC79462"/>
    <property type="gene ID" value="lp_2253"/>
</dbReference>
<dbReference type="KEGG" id="lpl:lp_2253"/>
<dbReference type="PATRIC" id="fig|220668.9.peg.1905"/>
<dbReference type="eggNOG" id="COG0217">
    <property type="taxonomic scope" value="Bacteria"/>
</dbReference>
<dbReference type="HOGENOM" id="CLU_062974_3_0_9"/>
<dbReference type="OrthoDB" id="9781053at2"/>
<dbReference type="PhylomeDB" id="Q88V33"/>
<dbReference type="Proteomes" id="UP000000432">
    <property type="component" value="Chromosome"/>
</dbReference>
<dbReference type="GO" id="GO:0005829">
    <property type="term" value="C:cytosol"/>
    <property type="evidence" value="ECO:0007669"/>
    <property type="project" value="TreeGrafter"/>
</dbReference>
<dbReference type="GO" id="GO:0003677">
    <property type="term" value="F:DNA binding"/>
    <property type="evidence" value="ECO:0007669"/>
    <property type="project" value="UniProtKB-UniRule"/>
</dbReference>
<dbReference type="GO" id="GO:0006355">
    <property type="term" value="P:regulation of DNA-templated transcription"/>
    <property type="evidence" value="ECO:0007669"/>
    <property type="project" value="UniProtKB-UniRule"/>
</dbReference>
<dbReference type="FunFam" id="1.10.10.200:FF:000002">
    <property type="entry name" value="Probable transcriptional regulatory protein CLM62_37755"/>
    <property type="match status" value="1"/>
</dbReference>
<dbReference type="FunFam" id="3.30.70.980:FF:000002">
    <property type="entry name" value="Probable transcriptional regulatory protein YebC"/>
    <property type="match status" value="1"/>
</dbReference>
<dbReference type="Gene3D" id="1.10.10.200">
    <property type="match status" value="1"/>
</dbReference>
<dbReference type="Gene3D" id="3.30.70.980">
    <property type="match status" value="2"/>
</dbReference>
<dbReference type="HAMAP" id="MF_00693">
    <property type="entry name" value="Transcrip_reg_TACO1"/>
    <property type="match status" value="1"/>
</dbReference>
<dbReference type="InterPro" id="IPR017856">
    <property type="entry name" value="Integrase-like_N"/>
</dbReference>
<dbReference type="InterPro" id="IPR048300">
    <property type="entry name" value="TACO1_YebC-like_2nd/3rd_dom"/>
</dbReference>
<dbReference type="InterPro" id="IPR049083">
    <property type="entry name" value="TACO1_YebC_N"/>
</dbReference>
<dbReference type="InterPro" id="IPR002876">
    <property type="entry name" value="Transcrip_reg_TACO1-like"/>
</dbReference>
<dbReference type="InterPro" id="IPR026564">
    <property type="entry name" value="Transcrip_reg_TACO1-like_dom3"/>
</dbReference>
<dbReference type="InterPro" id="IPR029072">
    <property type="entry name" value="YebC-like"/>
</dbReference>
<dbReference type="NCBIfam" id="NF001030">
    <property type="entry name" value="PRK00110.1"/>
    <property type="match status" value="1"/>
</dbReference>
<dbReference type="NCBIfam" id="NF009044">
    <property type="entry name" value="PRK12378.1"/>
    <property type="match status" value="1"/>
</dbReference>
<dbReference type="NCBIfam" id="TIGR01033">
    <property type="entry name" value="YebC/PmpR family DNA-binding transcriptional regulator"/>
    <property type="match status" value="1"/>
</dbReference>
<dbReference type="PANTHER" id="PTHR12532:SF6">
    <property type="entry name" value="TRANSCRIPTIONAL REGULATORY PROTEIN YEBC-RELATED"/>
    <property type="match status" value="1"/>
</dbReference>
<dbReference type="PANTHER" id="PTHR12532">
    <property type="entry name" value="TRANSLATIONAL ACTIVATOR OF CYTOCHROME C OXIDASE 1"/>
    <property type="match status" value="1"/>
</dbReference>
<dbReference type="Pfam" id="PF20772">
    <property type="entry name" value="TACO1_YebC_N"/>
    <property type="match status" value="1"/>
</dbReference>
<dbReference type="Pfam" id="PF01709">
    <property type="entry name" value="Transcrip_reg"/>
    <property type="match status" value="1"/>
</dbReference>
<dbReference type="SUPFAM" id="SSF75625">
    <property type="entry name" value="YebC-like"/>
    <property type="match status" value="1"/>
</dbReference>
<accession>Q88V33</accession>
<accession>F9UQH3</accession>
<name>Y2253_LACPL</name>
<gene>
    <name type="ordered locus">lp_2253</name>
</gene>
<keyword id="KW-0963">Cytoplasm</keyword>
<keyword id="KW-0238">DNA-binding</keyword>
<keyword id="KW-1185">Reference proteome</keyword>
<keyword id="KW-0804">Transcription</keyword>
<keyword id="KW-0805">Transcription regulation</keyword>
<protein>
    <recommendedName>
        <fullName evidence="1">Probable transcriptional regulatory protein lp_2253</fullName>
    </recommendedName>
</protein>
<reference key="1">
    <citation type="journal article" date="2003" name="Proc. Natl. Acad. Sci. U.S.A.">
        <title>Complete genome sequence of Lactobacillus plantarum WCFS1.</title>
        <authorList>
            <person name="Kleerebezem M."/>
            <person name="Boekhorst J."/>
            <person name="van Kranenburg R."/>
            <person name="Molenaar D."/>
            <person name="Kuipers O.P."/>
            <person name="Leer R."/>
            <person name="Tarchini R."/>
            <person name="Peters S.A."/>
            <person name="Sandbrink H.M."/>
            <person name="Fiers M.W.E.J."/>
            <person name="Stiekema W."/>
            <person name="Klein Lankhorst R.M."/>
            <person name="Bron P.A."/>
            <person name="Hoffer S.M."/>
            <person name="Nierop Groot M.N."/>
            <person name="Kerkhoven R."/>
            <person name="De Vries M."/>
            <person name="Ursing B."/>
            <person name="De Vos W.M."/>
            <person name="Siezen R.J."/>
        </authorList>
    </citation>
    <scope>NUCLEOTIDE SEQUENCE [LARGE SCALE GENOMIC DNA]</scope>
    <source>
        <strain>ATCC BAA-793 / NCIMB 8826 / WCFS1</strain>
    </source>
</reference>
<reference key="2">
    <citation type="journal article" date="2012" name="J. Bacteriol.">
        <title>Complete resequencing and reannotation of the Lactobacillus plantarum WCFS1 genome.</title>
        <authorList>
            <person name="Siezen R.J."/>
            <person name="Francke C."/>
            <person name="Renckens B."/>
            <person name="Boekhorst J."/>
            <person name="Wels M."/>
            <person name="Kleerebezem M."/>
            <person name="van Hijum S.A."/>
        </authorList>
    </citation>
    <scope>NUCLEOTIDE SEQUENCE [LARGE SCALE GENOMIC DNA]</scope>
    <scope>GENOME REANNOTATION</scope>
    <source>
        <strain>ATCC BAA-793 / NCIMB 8826 / WCFS1</strain>
    </source>
</reference>
<comment type="subcellular location">
    <subcellularLocation>
        <location evidence="1">Cytoplasm</location>
    </subcellularLocation>
</comment>
<comment type="similarity">
    <text evidence="1">Belongs to the TACO1 family.</text>
</comment>
<sequence length="242" mass="26430">MSGHSKWHNIQGRKNAQDAKRGKVFQKISRELYMAVKAGGPDPDSNAQLRLVMDKAKAANMPKDNIKRAVDKGSGSGAENYEEVTYEGYGPGGIAVLVHALTDNKNRTAAAVRSAFTHHGGALAATGAVSYMFDRKGYIVISREDLDTDEDTMLMDVLDAGGDDLQSSDEAFEIYTDPKQLAAVRDALEANGYKLETAELTMIPENLTDVPADKVEKLQHMIDELEDNDDVSEVYEAANYPD</sequence>
<feature type="chain" id="PRO_0000175827" description="Probable transcriptional regulatory protein lp_2253">
    <location>
        <begin position="1"/>
        <end position="242"/>
    </location>
</feature>
<feature type="region of interest" description="Disordered" evidence="2">
    <location>
        <begin position="1"/>
        <end position="21"/>
    </location>
</feature>
<evidence type="ECO:0000255" key="1">
    <source>
        <dbReference type="HAMAP-Rule" id="MF_00693"/>
    </source>
</evidence>
<evidence type="ECO:0000256" key="2">
    <source>
        <dbReference type="SAM" id="MobiDB-lite"/>
    </source>
</evidence>